<protein>
    <recommendedName>
        <fullName evidence="1">Large ribosomal subunit protein uL2</fullName>
    </recommendedName>
    <alternativeName>
        <fullName evidence="3">50S ribosomal protein L2</fullName>
    </alternativeName>
</protein>
<evidence type="ECO:0000255" key="1">
    <source>
        <dbReference type="HAMAP-Rule" id="MF_01320"/>
    </source>
</evidence>
<evidence type="ECO:0000256" key="2">
    <source>
        <dbReference type="SAM" id="MobiDB-lite"/>
    </source>
</evidence>
<evidence type="ECO:0000305" key="3"/>
<comment type="function">
    <text evidence="1">One of the primary rRNA binding proteins. Required for association of the 30S and 50S subunits to form the 70S ribosome, for tRNA binding and peptide bond formation. It has been suggested to have peptidyltransferase activity; this is somewhat controversial. Makes several contacts with the 16S rRNA in the 70S ribosome.</text>
</comment>
<comment type="subunit">
    <text evidence="1">Part of the 50S ribosomal subunit. Forms a bridge to the 30S subunit in the 70S ribosome.</text>
</comment>
<comment type="similarity">
    <text evidence="1">Belongs to the universal ribosomal protein uL2 family.</text>
</comment>
<dbReference type="EMBL" id="CP001398">
    <property type="protein sequence ID" value="ACS34502.1"/>
    <property type="molecule type" value="Genomic_DNA"/>
</dbReference>
<dbReference type="RefSeq" id="WP_015859605.1">
    <property type="nucleotide sequence ID" value="NC_012804.1"/>
</dbReference>
<dbReference type="SMR" id="C5A283"/>
<dbReference type="STRING" id="593117.TGAM_2000"/>
<dbReference type="PaxDb" id="593117-TGAM_2000"/>
<dbReference type="GeneID" id="7987057"/>
<dbReference type="KEGG" id="tga:TGAM_2000"/>
<dbReference type="PATRIC" id="fig|593117.10.peg.2010"/>
<dbReference type="eggNOG" id="arCOG04067">
    <property type="taxonomic scope" value="Archaea"/>
</dbReference>
<dbReference type="HOGENOM" id="CLU_036235_0_1_2"/>
<dbReference type="OrthoDB" id="5987at2157"/>
<dbReference type="Proteomes" id="UP000001488">
    <property type="component" value="Chromosome"/>
</dbReference>
<dbReference type="GO" id="GO:0022625">
    <property type="term" value="C:cytosolic large ribosomal subunit"/>
    <property type="evidence" value="ECO:0007669"/>
    <property type="project" value="TreeGrafter"/>
</dbReference>
<dbReference type="GO" id="GO:0019843">
    <property type="term" value="F:rRNA binding"/>
    <property type="evidence" value="ECO:0007669"/>
    <property type="project" value="UniProtKB-UniRule"/>
</dbReference>
<dbReference type="GO" id="GO:0003735">
    <property type="term" value="F:structural constituent of ribosome"/>
    <property type="evidence" value="ECO:0007669"/>
    <property type="project" value="InterPro"/>
</dbReference>
<dbReference type="GO" id="GO:0002181">
    <property type="term" value="P:cytoplasmic translation"/>
    <property type="evidence" value="ECO:0007669"/>
    <property type="project" value="TreeGrafter"/>
</dbReference>
<dbReference type="FunFam" id="2.30.30.30:FF:000001">
    <property type="entry name" value="50S ribosomal protein L2"/>
    <property type="match status" value="1"/>
</dbReference>
<dbReference type="FunFam" id="2.40.50.140:FF:000020">
    <property type="entry name" value="60S ribosomal protein L2"/>
    <property type="match status" value="1"/>
</dbReference>
<dbReference type="FunFam" id="4.10.950.10:FF:000002">
    <property type="entry name" value="60S ribosomal protein L2"/>
    <property type="match status" value="1"/>
</dbReference>
<dbReference type="Gene3D" id="2.30.30.30">
    <property type="match status" value="1"/>
</dbReference>
<dbReference type="Gene3D" id="2.40.50.140">
    <property type="entry name" value="Nucleic acid-binding proteins"/>
    <property type="match status" value="1"/>
</dbReference>
<dbReference type="Gene3D" id="4.10.950.10">
    <property type="entry name" value="Ribosomal protein L2, domain 3"/>
    <property type="match status" value="1"/>
</dbReference>
<dbReference type="HAMAP" id="MF_01320_A">
    <property type="entry name" value="Ribosomal_uL2_A"/>
    <property type="match status" value="1"/>
</dbReference>
<dbReference type="InterPro" id="IPR012340">
    <property type="entry name" value="NA-bd_OB-fold"/>
</dbReference>
<dbReference type="InterPro" id="IPR014722">
    <property type="entry name" value="Rib_uL2_dom2"/>
</dbReference>
<dbReference type="InterPro" id="IPR002171">
    <property type="entry name" value="Ribosomal_uL2"/>
</dbReference>
<dbReference type="InterPro" id="IPR023672">
    <property type="entry name" value="Ribosomal_uL2_arc_euk"/>
</dbReference>
<dbReference type="InterPro" id="IPR022669">
    <property type="entry name" value="Ribosomal_uL2_C"/>
</dbReference>
<dbReference type="InterPro" id="IPR014726">
    <property type="entry name" value="Ribosomal_uL2_dom3"/>
</dbReference>
<dbReference type="InterPro" id="IPR022666">
    <property type="entry name" value="Ribosomal_uL2_RNA-bd_dom"/>
</dbReference>
<dbReference type="InterPro" id="IPR008991">
    <property type="entry name" value="Translation_prot_SH3-like_sf"/>
</dbReference>
<dbReference type="NCBIfam" id="NF007180">
    <property type="entry name" value="PRK09612.1"/>
    <property type="match status" value="1"/>
</dbReference>
<dbReference type="PANTHER" id="PTHR13691:SF16">
    <property type="entry name" value="LARGE RIBOSOMAL SUBUNIT PROTEIN UL2"/>
    <property type="match status" value="1"/>
</dbReference>
<dbReference type="PANTHER" id="PTHR13691">
    <property type="entry name" value="RIBOSOMAL PROTEIN L2"/>
    <property type="match status" value="1"/>
</dbReference>
<dbReference type="Pfam" id="PF00181">
    <property type="entry name" value="Ribosomal_L2"/>
    <property type="match status" value="1"/>
</dbReference>
<dbReference type="Pfam" id="PF03947">
    <property type="entry name" value="Ribosomal_L2_C"/>
    <property type="match status" value="1"/>
</dbReference>
<dbReference type="PIRSF" id="PIRSF002158">
    <property type="entry name" value="Ribosomal_L2"/>
    <property type="match status" value="1"/>
</dbReference>
<dbReference type="SMART" id="SM01383">
    <property type="entry name" value="Ribosomal_L2"/>
    <property type="match status" value="1"/>
</dbReference>
<dbReference type="SMART" id="SM01382">
    <property type="entry name" value="Ribosomal_L2_C"/>
    <property type="match status" value="1"/>
</dbReference>
<dbReference type="SUPFAM" id="SSF50249">
    <property type="entry name" value="Nucleic acid-binding proteins"/>
    <property type="match status" value="1"/>
</dbReference>
<dbReference type="SUPFAM" id="SSF50104">
    <property type="entry name" value="Translation proteins SH3-like domain"/>
    <property type="match status" value="1"/>
</dbReference>
<name>RL2_THEGJ</name>
<gene>
    <name evidence="1" type="primary">rpl2</name>
    <name type="ordered locus">TGAM_2000</name>
</gene>
<feature type="chain" id="PRO_1000214467" description="Large ribosomal subunit protein uL2">
    <location>
        <begin position="1"/>
        <end position="239"/>
    </location>
</feature>
<feature type="region of interest" description="Disordered" evidence="2">
    <location>
        <begin position="200"/>
        <end position="239"/>
    </location>
</feature>
<feature type="compositionally biased region" description="Basic residues" evidence="2">
    <location>
        <begin position="222"/>
        <end position="239"/>
    </location>
</feature>
<sequence>MGKSLIQQRRGKGTTTFRAPSHRYRGAVKYVPLNIVKEKTLRGVVEEILHDPGRTAPVARVKFEDGTKKLILAPEGVLVGQEIYIGPEAPIAIGNTLPLAKIPEGTYVYNIEGVPGDGGKYVRAGGTYALVVSRERDKVIVQLPSGELKQFKPECRATIGVVAGGGRLEKPIVKAGKAYYIAKARNRFWPKPRGVKMNAVNHPHGGKEHHIGRPSTVSRRAPPGRKVGHIAARRTGRRK</sequence>
<reference key="1">
    <citation type="journal article" date="2007" name="Genome Biol.">
        <title>Genome analysis and genome-wide proteomics of Thermococcus gammatolerans, the most radioresistant organism known amongst the Archaea.</title>
        <authorList>
            <person name="Zivanovic Y."/>
            <person name="Armengaud J."/>
            <person name="Lagorce A."/>
            <person name="Leplat C."/>
            <person name="Guerin P."/>
            <person name="Dutertre M."/>
            <person name="Anthouard V."/>
            <person name="Forterre P."/>
            <person name="Wincker P."/>
            <person name="Confalonieri F."/>
        </authorList>
    </citation>
    <scope>NUCLEOTIDE SEQUENCE [LARGE SCALE GENOMIC DNA]</scope>
    <source>
        <strain>DSM 15229 / JCM 11827 / EJ3</strain>
    </source>
</reference>
<proteinExistence type="inferred from homology"/>
<accession>C5A283</accession>
<keyword id="KW-1185">Reference proteome</keyword>
<keyword id="KW-0687">Ribonucleoprotein</keyword>
<keyword id="KW-0689">Ribosomal protein</keyword>
<keyword id="KW-0694">RNA-binding</keyword>
<keyword id="KW-0699">rRNA-binding</keyword>
<organism>
    <name type="scientific">Thermococcus gammatolerans (strain DSM 15229 / JCM 11827 / EJ3)</name>
    <dbReference type="NCBI Taxonomy" id="593117"/>
    <lineage>
        <taxon>Archaea</taxon>
        <taxon>Methanobacteriati</taxon>
        <taxon>Methanobacteriota</taxon>
        <taxon>Thermococci</taxon>
        <taxon>Thermococcales</taxon>
        <taxon>Thermococcaceae</taxon>
        <taxon>Thermococcus</taxon>
    </lineage>
</organism>